<proteinExistence type="inferred from homology"/>
<evidence type="ECO:0000250" key="1">
    <source>
        <dbReference type="UniProtKB" id="P03891"/>
    </source>
</evidence>
<evidence type="ECO:0000250" key="2">
    <source>
        <dbReference type="UniProtKB" id="P03892"/>
    </source>
</evidence>
<evidence type="ECO:0000255" key="3"/>
<evidence type="ECO:0000305" key="4"/>
<comment type="function">
    <text evidence="1">Core subunit of the mitochondrial membrane respiratory chain NADH dehydrogenase (Complex I) which catalyzes electron transfer from NADH through the respiratory chain, using ubiquinone as an electron acceptor. Essential for the catalytic activity and assembly of complex I.</text>
</comment>
<comment type="catalytic activity">
    <reaction evidence="1">
        <text>a ubiquinone + NADH + 5 H(+)(in) = a ubiquinol + NAD(+) + 4 H(+)(out)</text>
        <dbReference type="Rhea" id="RHEA:29091"/>
        <dbReference type="Rhea" id="RHEA-COMP:9565"/>
        <dbReference type="Rhea" id="RHEA-COMP:9566"/>
        <dbReference type="ChEBI" id="CHEBI:15378"/>
        <dbReference type="ChEBI" id="CHEBI:16389"/>
        <dbReference type="ChEBI" id="CHEBI:17976"/>
        <dbReference type="ChEBI" id="CHEBI:57540"/>
        <dbReference type="ChEBI" id="CHEBI:57945"/>
        <dbReference type="EC" id="7.1.1.2"/>
    </reaction>
</comment>
<comment type="subunit">
    <text evidence="1 2">Core subunit of respiratory chain NADH dehydrogenase (Complex I) which is composed of 45 different subunits. Interacts with TMEM242 (By similarity).</text>
</comment>
<comment type="subcellular location">
    <subcellularLocation>
        <location evidence="2">Mitochondrion inner membrane</location>
        <topology evidence="3">Multi-pass membrane protein</topology>
    </subcellularLocation>
</comment>
<comment type="similarity">
    <text evidence="4">Belongs to the complex I subunit 2 family.</text>
</comment>
<gene>
    <name evidence="1" type="primary">MT-ND2</name>
    <name type="synonym">MTND2</name>
    <name type="synonym">NADH2</name>
    <name type="synonym">ND2</name>
</gene>
<name>NU2M_SACLE</name>
<protein>
    <recommendedName>
        <fullName evidence="1">NADH-ubiquinone oxidoreductase chain 2</fullName>
        <ecNumber evidence="1">7.1.1.2</ecNumber>
    </recommendedName>
    <alternativeName>
        <fullName>NADH dehydrogenase subunit 2</fullName>
    </alternativeName>
</protein>
<dbReference type="EC" id="7.1.1.2" evidence="1"/>
<dbReference type="EMBL" id="AY504524">
    <property type="protein sequence ID" value="AAS91389.1"/>
    <property type="molecule type" value="Genomic_DNA"/>
</dbReference>
<dbReference type="SMR" id="Q330G8"/>
<dbReference type="GO" id="GO:0005743">
    <property type="term" value="C:mitochondrial inner membrane"/>
    <property type="evidence" value="ECO:0000250"/>
    <property type="project" value="UniProtKB"/>
</dbReference>
<dbReference type="GO" id="GO:0008137">
    <property type="term" value="F:NADH dehydrogenase (ubiquinone) activity"/>
    <property type="evidence" value="ECO:0000250"/>
    <property type="project" value="UniProtKB"/>
</dbReference>
<dbReference type="GO" id="GO:0006120">
    <property type="term" value="P:mitochondrial electron transport, NADH to ubiquinone"/>
    <property type="evidence" value="ECO:0000250"/>
    <property type="project" value="UniProtKB"/>
</dbReference>
<dbReference type="GO" id="GO:0032981">
    <property type="term" value="P:mitochondrial respiratory chain complex I assembly"/>
    <property type="evidence" value="ECO:0000250"/>
    <property type="project" value="UniProtKB"/>
</dbReference>
<dbReference type="InterPro" id="IPR050175">
    <property type="entry name" value="Complex_I_Subunit_2"/>
</dbReference>
<dbReference type="InterPro" id="IPR010933">
    <property type="entry name" value="NADH_DH_su2_C"/>
</dbReference>
<dbReference type="InterPro" id="IPR003917">
    <property type="entry name" value="NADH_UbQ_OxRdtase_chain2"/>
</dbReference>
<dbReference type="InterPro" id="IPR001750">
    <property type="entry name" value="ND/Mrp_TM"/>
</dbReference>
<dbReference type="PANTHER" id="PTHR46552">
    <property type="entry name" value="NADH-UBIQUINONE OXIDOREDUCTASE CHAIN 2"/>
    <property type="match status" value="1"/>
</dbReference>
<dbReference type="PANTHER" id="PTHR46552:SF1">
    <property type="entry name" value="NADH-UBIQUINONE OXIDOREDUCTASE CHAIN 2"/>
    <property type="match status" value="1"/>
</dbReference>
<dbReference type="Pfam" id="PF06444">
    <property type="entry name" value="NADH_dehy_S2_C"/>
    <property type="match status" value="1"/>
</dbReference>
<dbReference type="Pfam" id="PF00361">
    <property type="entry name" value="Proton_antipo_M"/>
    <property type="match status" value="1"/>
</dbReference>
<dbReference type="PRINTS" id="PR01436">
    <property type="entry name" value="NADHDHGNASE2"/>
</dbReference>
<accession>Q330G8</accession>
<feature type="chain" id="PRO_0000256681" description="NADH-ubiquinone oxidoreductase chain 2">
    <location>
        <begin position="1"/>
        <end position="347"/>
    </location>
</feature>
<feature type="transmembrane region" description="Helical" evidence="3">
    <location>
        <begin position="3"/>
        <end position="23"/>
    </location>
</feature>
<feature type="transmembrane region" description="Helical" evidence="3">
    <location>
        <begin position="25"/>
        <end position="45"/>
    </location>
</feature>
<feature type="transmembrane region" description="Helical" evidence="3">
    <location>
        <begin position="59"/>
        <end position="79"/>
    </location>
</feature>
<feature type="transmembrane region" description="Helical" evidence="3">
    <location>
        <begin position="96"/>
        <end position="116"/>
    </location>
</feature>
<feature type="transmembrane region" description="Helical" evidence="3">
    <location>
        <begin position="148"/>
        <end position="170"/>
    </location>
</feature>
<feature type="transmembrane region" description="Helical" evidence="3">
    <location>
        <begin position="178"/>
        <end position="198"/>
    </location>
</feature>
<feature type="transmembrane region" description="Helical" evidence="3">
    <location>
        <begin position="200"/>
        <end position="220"/>
    </location>
</feature>
<feature type="transmembrane region" description="Helical" evidence="3">
    <location>
        <begin position="247"/>
        <end position="267"/>
    </location>
</feature>
<feature type="transmembrane region" description="Helical" evidence="3">
    <location>
        <begin position="276"/>
        <end position="296"/>
    </location>
</feature>
<feature type="transmembrane region" description="Helical" evidence="3">
    <location>
        <begin position="326"/>
        <end position="346"/>
    </location>
</feature>
<geneLocation type="mitochondrion"/>
<organism>
    <name type="scientific">Saccopteryx leptura</name>
    <name type="common">Lesser sac-winged bat</name>
    <name type="synonym">Lesser white-lined bat</name>
    <dbReference type="NCBI Taxonomy" id="249018"/>
    <lineage>
        <taxon>Eukaryota</taxon>
        <taxon>Metazoa</taxon>
        <taxon>Chordata</taxon>
        <taxon>Craniata</taxon>
        <taxon>Vertebrata</taxon>
        <taxon>Euteleostomi</taxon>
        <taxon>Mammalia</taxon>
        <taxon>Eutheria</taxon>
        <taxon>Laurasiatheria</taxon>
        <taxon>Chiroptera</taxon>
        <taxon>Yangochiroptera</taxon>
        <taxon>Emballonuridae</taxon>
        <taxon>Emballonurinae</taxon>
        <taxon>Saccopteryx</taxon>
    </lineage>
</organism>
<sequence length="347" mass="38919">MNPLILIMIMLTVILGTTIVMMSSHWLMIWMGFEMNMLAVIPLLMKQYNPRSMEAATKYFLTQATASMLLMLAIIINLLYSGQWTFTKLMNPTASIIMTLAMAMKMGLAPLHFWVPEVTQGISLSSGLILLTWQKLAPLSVLYVISPGINLDLILLMSMMSIAIGGWGGLNQTQLRKILAYSSIAHMGWMASILAFNPTMTLLNLLLYILMTTTTFMLFMATSATTTLSLSHMWNKMPLITSSTLTIMLSLGGLPPLVGFLPKWMIIQELTKNNNITLATLMAITALLNLFFYMRLTYATSLTMFPTMNNMKIKWQFNNKKQMKYLPMLIILSTITLPLAPAITLLN</sequence>
<reference key="1">
    <citation type="submission" date="2003-12" db="EMBL/GenBank/DDBJ databases">
        <title>Bats and birds: flying in the face of mtDNA evolutionary rates.</title>
        <authorList>
            <person name="Worthington Wilmer J.M."/>
            <person name="Schneider C.J."/>
            <person name="Sorenson M.D."/>
        </authorList>
    </citation>
    <scope>NUCLEOTIDE SEQUENCE [GENOMIC DNA]</scope>
    <source>
        <strain>Isolate CR1</strain>
    </source>
</reference>
<keyword id="KW-0249">Electron transport</keyword>
<keyword id="KW-0472">Membrane</keyword>
<keyword id="KW-0496">Mitochondrion</keyword>
<keyword id="KW-0999">Mitochondrion inner membrane</keyword>
<keyword id="KW-0520">NAD</keyword>
<keyword id="KW-0679">Respiratory chain</keyword>
<keyword id="KW-1278">Translocase</keyword>
<keyword id="KW-0812">Transmembrane</keyword>
<keyword id="KW-1133">Transmembrane helix</keyword>
<keyword id="KW-0813">Transport</keyword>
<keyword id="KW-0830">Ubiquinone</keyword>